<sequence length="252" mass="27411">MQYPVDTHTHTVASSHAYSTIHDYLAVAKQKGVRLFATTDHGPAMADAPHFWHFVNLRVLPRMVDGVGILRGIEANIKNRDGEIDYFGDYLSQLDIVLAGFHEPVFAPSDKVTHTEAMINTIRSGKVDIITHPGNPAYPIDIEAVVTAAAQYGVALEINNSSFEVSRKGSEANCTAIAKAAKALGATLVMGSDSHVAFSLGGFDRALSIIDAVDYPKDKLLNRSPMALLDFLTLRGHQTVADFIPHFRDEAI</sequence>
<proteinExistence type="inferred from homology"/>
<feature type="chain" id="PRO_0000228700" description="Probable phosphatase SO_1652">
    <location>
        <begin position="1"/>
        <end position="252"/>
    </location>
</feature>
<feature type="binding site" evidence="1">
    <location>
        <position position="8"/>
    </location>
    <ligand>
        <name>Zn(2+)</name>
        <dbReference type="ChEBI" id="CHEBI:29105"/>
        <label>1</label>
    </ligand>
</feature>
<feature type="binding site" evidence="1">
    <location>
        <position position="10"/>
    </location>
    <ligand>
        <name>Zn(2+)</name>
        <dbReference type="ChEBI" id="CHEBI:29105"/>
        <label>1</label>
    </ligand>
</feature>
<feature type="binding site" evidence="1">
    <location>
        <position position="16"/>
    </location>
    <ligand>
        <name>Zn(2+)</name>
        <dbReference type="ChEBI" id="CHEBI:29105"/>
        <label>2</label>
    </ligand>
</feature>
<feature type="binding site" evidence="1">
    <location>
        <position position="41"/>
    </location>
    <ligand>
        <name>Zn(2+)</name>
        <dbReference type="ChEBI" id="CHEBI:29105"/>
        <label>2</label>
    </ligand>
</feature>
<feature type="binding site" evidence="1">
    <location>
        <position position="74"/>
    </location>
    <ligand>
        <name>Zn(2+)</name>
        <dbReference type="ChEBI" id="CHEBI:29105"/>
        <label>1</label>
    </ligand>
</feature>
<feature type="binding site" evidence="1">
    <location>
        <position position="74"/>
    </location>
    <ligand>
        <name>Zn(2+)</name>
        <dbReference type="ChEBI" id="CHEBI:29105"/>
        <label>3</label>
    </ligand>
</feature>
<feature type="binding site" evidence="1">
    <location>
        <position position="102"/>
    </location>
    <ligand>
        <name>Zn(2+)</name>
        <dbReference type="ChEBI" id="CHEBI:29105"/>
        <label>3</label>
    </ligand>
</feature>
<feature type="binding site" evidence="1">
    <location>
        <position position="132"/>
    </location>
    <ligand>
        <name>Zn(2+)</name>
        <dbReference type="ChEBI" id="CHEBI:29105"/>
        <label>3</label>
    </ligand>
</feature>
<feature type="binding site" evidence="1">
    <location>
        <position position="193"/>
    </location>
    <ligand>
        <name>Zn(2+)</name>
        <dbReference type="ChEBI" id="CHEBI:29105"/>
        <label>1</label>
    </ligand>
</feature>
<feature type="binding site" evidence="1">
    <location>
        <position position="195"/>
    </location>
    <ligand>
        <name>Zn(2+)</name>
        <dbReference type="ChEBI" id="CHEBI:29105"/>
        <label>2</label>
    </ligand>
</feature>
<comment type="cofactor">
    <cofactor evidence="1">
        <name>Zn(2+)</name>
        <dbReference type="ChEBI" id="CHEBI:29105"/>
    </cofactor>
    <text evidence="1">Binds 3 Zn(2+) ions per subunit.</text>
</comment>
<comment type="similarity">
    <text evidence="1">Belongs to the PHP family.</text>
</comment>
<protein>
    <recommendedName>
        <fullName evidence="1">Probable phosphatase SO_1652</fullName>
        <ecNumber evidence="1">3.1.3.-</ecNumber>
    </recommendedName>
</protein>
<reference key="1">
    <citation type="journal article" date="2002" name="Nat. Biotechnol.">
        <title>Genome sequence of the dissimilatory metal ion-reducing bacterium Shewanella oneidensis.</title>
        <authorList>
            <person name="Heidelberg J.F."/>
            <person name="Paulsen I.T."/>
            <person name="Nelson K.E."/>
            <person name="Gaidos E.J."/>
            <person name="Nelson W.C."/>
            <person name="Read T.D."/>
            <person name="Eisen J.A."/>
            <person name="Seshadri R."/>
            <person name="Ward N.L."/>
            <person name="Methe B.A."/>
            <person name="Clayton R.A."/>
            <person name="Meyer T."/>
            <person name="Tsapin A."/>
            <person name="Scott J."/>
            <person name="Beanan M.J."/>
            <person name="Brinkac L.M."/>
            <person name="Daugherty S.C."/>
            <person name="DeBoy R.T."/>
            <person name="Dodson R.J."/>
            <person name="Durkin A.S."/>
            <person name="Haft D.H."/>
            <person name="Kolonay J.F."/>
            <person name="Madupu R."/>
            <person name="Peterson J.D."/>
            <person name="Umayam L.A."/>
            <person name="White O."/>
            <person name="Wolf A.M."/>
            <person name="Vamathevan J.J."/>
            <person name="Weidman J.F."/>
            <person name="Impraim M."/>
            <person name="Lee K."/>
            <person name="Berry K.J."/>
            <person name="Lee C."/>
            <person name="Mueller J."/>
            <person name="Khouri H.M."/>
            <person name="Gill J."/>
            <person name="Utterback T.R."/>
            <person name="McDonald L.A."/>
            <person name="Feldblyum T.V."/>
            <person name="Smith H.O."/>
            <person name="Venter J.C."/>
            <person name="Nealson K.H."/>
            <person name="Fraser C.M."/>
        </authorList>
    </citation>
    <scope>NUCLEOTIDE SEQUENCE [LARGE SCALE GENOMIC DNA]</scope>
    <source>
        <strain>ATCC 700550 / JCM 31522 / CIP 106686 / LMG 19005 / NCIMB 14063 / MR-1</strain>
    </source>
</reference>
<gene>
    <name type="ordered locus">SO_1652</name>
</gene>
<name>Y1652_SHEON</name>
<organism>
    <name type="scientific">Shewanella oneidensis (strain ATCC 700550 / JCM 31522 / CIP 106686 / LMG 19005 / NCIMB 14063 / MR-1)</name>
    <dbReference type="NCBI Taxonomy" id="211586"/>
    <lineage>
        <taxon>Bacteria</taxon>
        <taxon>Pseudomonadati</taxon>
        <taxon>Pseudomonadota</taxon>
        <taxon>Gammaproteobacteria</taxon>
        <taxon>Alteromonadales</taxon>
        <taxon>Shewanellaceae</taxon>
        <taxon>Shewanella</taxon>
    </lineage>
</organism>
<accession>Q8EGF2</accession>
<dbReference type="EC" id="3.1.3.-" evidence="1"/>
<dbReference type="EMBL" id="AE014299">
    <property type="protein sequence ID" value="AAN54707.1"/>
    <property type="molecule type" value="Genomic_DNA"/>
</dbReference>
<dbReference type="RefSeq" id="NP_717263.1">
    <property type="nucleotide sequence ID" value="NC_004347.2"/>
</dbReference>
<dbReference type="RefSeq" id="WP_011071805.1">
    <property type="nucleotide sequence ID" value="NC_004347.2"/>
</dbReference>
<dbReference type="SMR" id="Q8EGF2"/>
<dbReference type="STRING" id="211586.SO_1652"/>
<dbReference type="PaxDb" id="211586-SO_1652"/>
<dbReference type="KEGG" id="son:SO_1652"/>
<dbReference type="PATRIC" id="fig|211586.12.peg.1593"/>
<dbReference type="eggNOG" id="COG1387">
    <property type="taxonomic scope" value="Bacteria"/>
</dbReference>
<dbReference type="HOGENOM" id="CLU_061999_0_1_6"/>
<dbReference type="OrthoDB" id="9808747at2"/>
<dbReference type="PhylomeDB" id="Q8EGF2"/>
<dbReference type="BioCyc" id="SONE211586:G1GMP-1521-MONOMER"/>
<dbReference type="Proteomes" id="UP000008186">
    <property type="component" value="Chromosome"/>
</dbReference>
<dbReference type="GO" id="GO:0005829">
    <property type="term" value="C:cytosol"/>
    <property type="evidence" value="ECO:0000318"/>
    <property type="project" value="GO_Central"/>
</dbReference>
<dbReference type="GO" id="GO:0016791">
    <property type="term" value="F:phosphatase activity"/>
    <property type="evidence" value="ECO:0007669"/>
    <property type="project" value="UniProtKB-UniRule"/>
</dbReference>
<dbReference type="GO" id="GO:0042578">
    <property type="term" value="F:phosphoric ester hydrolase activity"/>
    <property type="evidence" value="ECO:0000318"/>
    <property type="project" value="GO_Central"/>
</dbReference>
<dbReference type="GO" id="GO:0008270">
    <property type="term" value="F:zinc ion binding"/>
    <property type="evidence" value="ECO:0000318"/>
    <property type="project" value="GO_Central"/>
</dbReference>
<dbReference type="GO" id="GO:0071978">
    <property type="term" value="P:bacterial-type flagellum-dependent swarming motility"/>
    <property type="evidence" value="ECO:0000318"/>
    <property type="project" value="GO_Central"/>
</dbReference>
<dbReference type="CDD" id="cd07437">
    <property type="entry name" value="PHP_HisPPase_Ycdx_like"/>
    <property type="match status" value="1"/>
</dbReference>
<dbReference type="FunFam" id="3.20.20.140:FF:000008">
    <property type="entry name" value="Probable phosphatase YcdX"/>
    <property type="match status" value="1"/>
</dbReference>
<dbReference type="Gene3D" id="3.20.20.140">
    <property type="entry name" value="Metal-dependent hydrolases"/>
    <property type="match status" value="1"/>
</dbReference>
<dbReference type="HAMAP" id="MF_01561">
    <property type="entry name" value="YcdX_phosphat"/>
    <property type="match status" value="1"/>
</dbReference>
<dbReference type="InterPro" id="IPR023710">
    <property type="entry name" value="Phosphatase_YcdX_put"/>
</dbReference>
<dbReference type="InterPro" id="IPR004013">
    <property type="entry name" value="PHP_dom"/>
</dbReference>
<dbReference type="InterPro" id="IPR050243">
    <property type="entry name" value="PHP_phosphatase"/>
</dbReference>
<dbReference type="InterPro" id="IPR003141">
    <property type="entry name" value="Pol/His_phosphatase_N"/>
</dbReference>
<dbReference type="InterPro" id="IPR016195">
    <property type="entry name" value="Pol/histidinol_Pase-like"/>
</dbReference>
<dbReference type="NCBIfam" id="NF006702">
    <property type="entry name" value="PRK09248.1"/>
    <property type="match status" value="1"/>
</dbReference>
<dbReference type="PANTHER" id="PTHR36928">
    <property type="entry name" value="PHOSPHATASE YCDX-RELATED"/>
    <property type="match status" value="1"/>
</dbReference>
<dbReference type="PANTHER" id="PTHR36928:SF1">
    <property type="entry name" value="PHOSPHATASE YCDX-RELATED"/>
    <property type="match status" value="1"/>
</dbReference>
<dbReference type="Pfam" id="PF02811">
    <property type="entry name" value="PHP"/>
    <property type="match status" value="1"/>
</dbReference>
<dbReference type="SMART" id="SM00481">
    <property type="entry name" value="POLIIIAc"/>
    <property type="match status" value="1"/>
</dbReference>
<dbReference type="SUPFAM" id="SSF89550">
    <property type="entry name" value="PHP domain-like"/>
    <property type="match status" value="1"/>
</dbReference>
<keyword id="KW-0378">Hydrolase</keyword>
<keyword id="KW-0479">Metal-binding</keyword>
<keyword id="KW-1185">Reference proteome</keyword>
<keyword id="KW-0862">Zinc</keyword>
<evidence type="ECO:0000255" key="1">
    <source>
        <dbReference type="HAMAP-Rule" id="MF_01561"/>
    </source>
</evidence>